<reference key="1">
    <citation type="journal article" date="2013" name="Biochim. Biophys. Acta">
        <title>Cysteine-rich toxins from Lachesana tarabaevi spider venom with amphiphilic C-terminal segments.</title>
        <authorList>
            <person name="Kuzmenkov A.I."/>
            <person name="Fedorova I.M."/>
            <person name="Vassilevski A.A."/>
            <person name="Grishin E.V."/>
        </authorList>
    </citation>
    <scope>NUCLEOTIDE SEQUENCE [MRNA]</scope>
    <scope>PROTEIN SEQUENCE OF 44-110</scope>
    <scope>FUNCTION</scope>
    <scope>SUBCELLULAR LOCATION</scope>
    <scope>DISULFIDE BONDS</scope>
    <scope>MASS SPECTROMETRY</scope>
    <scope>TOXIC DOSE</scope>
    <scope>AMIDATION AT VAL-110</scope>
    <source>
        <tissue>Venom</tissue>
        <tissue>Venom gland</tissue>
    </source>
</reference>
<reference key="2">
    <citation type="journal article" date="2016" name="Biochem. J.">
        <title>Lachesana tarabaevi, an expert in membrane-active toxins.</title>
        <authorList>
            <person name="Kuzmenkov A.I."/>
            <person name="Sachkova M.Y."/>
            <person name="Kovalchuk S.I."/>
            <person name="Grishin E.V."/>
            <person name="Vassilevski A.A."/>
        </authorList>
    </citation>
    <scope>SUBCELLULAR LOCATION</scope>
    <scope>PQM MOTIF</scope>
    <scope>MASS SPECTROMETRY</scope>
    <source>
        <tissue>Venom</tissue>
    </source>
</reference>
<sequence>MKVLVIIALCFFILQTALSEDKYESFESYVEDLKSGNMKGEARECIPLYNDCKEFKYNNNCCKDPEKKYQYKCSCIMCEGGEEQCTCQRKETVENMMKCVRFVKKVVEKVG</sequence>
<evidence type="ECO:0000250" key="1">
    <source>
        <dbReference type="UniProtKB" id="P58604"/>
    </source>
</evidence>
<evidence type="ECO:0000255" key="2"/>
<evidence type="ECO:0000269" key="3">
    <source>
    </source>
</evidence>
<evidence type="ECO:0000269" key="4">
    <source>
    </source>
</evidence>
<evidence type="ECO:0000303" key="5">
    <source>
    </source>
</evidence>
<evidence type="ECO:0000303" key="6">
    <source>
    </source>
</evidence>
<evidence type="ECO:0000305" key="7"/>
<evidence type="ECO:0000305" key="8">
    <source>
    </source>
</evidence>
<evidence type="ECO:0000305" key="9">
    <source>
    </source>
</evidence>
<feature type="signal peptide" evidence="2">
    <location>
        <begin position="1"/>
        <end position="19"/>
    </location>
</feature>
<feature type="propeptide" id="PRO_0000421847" description="Removed in mature form" evidence="3">
    <location>
        <begin position="20"/>
        <end position="43"/>
    </location>
</feature>
<feature type="peptide" id="PRO_0000421848" description="Latartoxin-2b">
    <location>
        <begin position="44"/>
        <end position="110"/>
    </location>
</feature>
<feature type="short sequence motif" description="Processing quadruplet motif" evidence="6">
    <location>
        <begin position="40"/>
        <end position="43"/>
    </location>
</feature>
<feature type="modified residue" description="Valine amide" evidence="3">
    <location>
        <position position="110"/>
    </location>
</feature>
<feature type="disulfide bond" evidence="1">
    <location>
        <begin position="45"/>
        <end position="62"/>
    </location>
</feature>
<feature type="disulfide bond" evidence="1">
    <location>
        <begin position="52"/>
        <end position="73"/>
    </location>
</feature>
<feature type="disulfide bond" evidence="1">
    <location>
        <begin position="61"/>
        <end position="87"/>
    </location>
</feature>
<feature type="disulfide bond" evidence="1">
    <location>
        <begin position="75"/>
        <end position="85"/>
    </location>
</feature>
<feature type="disulfide bond" evidence="5">
    <location>
        <begin position="78"/>
        <end position="99"/>
    </location>
</feature>
<protein>
    <recommendedName>
        <fullName evidence="5">Latartoxin-2b</fullName>
        <shortName evidence="5">LtTx-2b</shortName>
    </recommendedName>
</protein>
<name>LTX2B_LACTA</name>
<accession>B3EWF5</accession>
<accession>K7WU42</accession>
<dbReference type="EMBL" id="JQ513645">
    <property type="protein sequence ID" value="AFX65330.1"/>
    <property type="molecule type" value="mRNA"/>
</dbReference>
<dbReference type="EMBL" id="JQ513646">
    <property type="protein sequence ID" value="AFX65331.1"/>
    <property type="molecule type" value="mRNA"/>
</dbReference>
<dbReference type="SMR" id="B3EWF5"/>
<dbReference type="ArachnoServer" id="AS001831">
    <property type="toxin name" value="U2-zodatoxin-Lt2b"/>
</dbReference>
<dbReference type="GO" id="GO:0005576">
    <property type="term" value="C:extracellular region"/>
    <property type="evidence" value="ECO:0007669"/>
    <property type="project" value="UniProtKB-SubCell"/>
</dbReference>
<dbReference type="GO" id="GO:0090729">
    <property type="term" value="F:toxin activity"/>
    <property type="evidence" value="ECO:0007669"/>
    <property type="project" value="UniProtKB-KW"/>
</dbReference>
<comment type="function">
    <text evidence="3">Insect toxin.</text>
</comment>
<comment type="subcellular location">
    <subcellularLocation>
        <location evidence="3 4">Secreted</location>
    </subcellularLocation>
</comment>
<comment type="tissue specificity">
    <text evidence="8 9">Expressed by the venom gland.</text>
</comment>
<comment type="domain">
    <text evidence="7">The presence of a 'disulfide through disulfide knot' structurally defines this protein as a knottin.</text>
</comment>
<comment type="PTM">
    <text evidence="3">Contains 5 disulfide bonds.</text>
</comment>
<comment type="PTM">
    <text evidence="6">Cleavage of the propeptide depends on the processing quadruplet motif (XXXR, with at least one of X being E).</text>
</comment>
<comment type="mass spectrometry"/>
<comment type="mass spectrometry"/>
<comment type="toxic dose">
    <text evidence="3">LD(50) is 65 ug/g in flesh fly larvae (S.carnaria).</text>
</comment>
<comment type="toxic dose">
    <text evidence="3">LD(50) is 60 ug/g in house crickets (Acheta domesticus).</text>
</comment>
<comment type="similarity">
    <text evidence="2">Belongs to the neurotoxin 19 (CSTX) family. 11 (latartoxin) subfamily.</text>
</comment>
<proteinExistence type="evidence at protein level"/>
<organism>
    <name type="scientific">Lachesana tarabaevi</name>
    <name type="common">Spider</name>
    <dbReference type="NCBI Taxonomy" id="379576"/>
    <lineage>
        <taxon>Eukaryota</taxon>
        <taxon>Metazoa</taxon>
        <taxon>Ecdysozoa</taxon>
        <taxon>Arthropoda</taxon>
        <taxon>Chelicerata</taxon>
        <taxon>Arachnida</taxon>
        <taxon>Araneae</taxon>
        <taxon>Araneomorphae</taxon>
        <taxon>Entelegynae</taxon>
        <taxon>Entelegynae incertae sedis</taxon>
        <taxon>Zodariidae</taxon>
        <taxon>Lachesana</taxon>
    </lineage>
</organism>
<keyword id="KW-0027">Amidation</keyword>
<keyword id="KW-0903">Direct protein sequencing</keyword>
<keyword id="KW-1015">Disulfide bond</keyword>
<keyword id="KW-0960">Knottin</keyword>
<keyword id="KW-0964">Secreted</keyword>
<keyword id="KW-0732">Signal</keyword>
<keyword id="KW-0800">Toxin</keyword>